<protein>
    <recommendedName>
        <fullName evidence="1">NAD kinase</fullName>
        <ecNumber evidence="1">2.7.1.23</ecNumber>
    </recommendedName>
    <alternativeName>
        <fullName evidence="1">ATP-dependent NAD kinase</fullName>
    </alternativeName>
</protein>
<accession>A3QGP1</accession>
<keyword id="KW-0067">ATP-binding</keyword>
<keyword id="KW-0963">Cytoplasm</keyword>
<keyword id="KW-0418">Kinase</keyword>
<keyword id="KW-0520">NAD</keyword>
<keyword id="KW-0521">NADP</keyword>
<keyword id="KW-0547">Nucleotide-binding</keyword>
<keyword id="KW-1185">Reference proteome</keyword>
<keyword id="KW-0808">Transferase</keyword>
<comment type="function">
    <text evidence="1">Involved in the regulation of the intracellular balance of NAD and NADP, and is a key enzyme in the biosynthesis of NADP. Catalyzes specifically the phosphorylation on 2'-hydroxyl of the adenosine moiety of NAD to yield NADP.</text>
</comment>
<comment type="catalytic activity">
    <reaction evidence="1">
        <text>NAD(+) + ATP = ADP + NADP(+) + H(+)</text>
        <dbReference type="Rhea" id="RHEA:18629"/>
        <dbReference type="ChEBI" id="CHEBI:15378"/>
        <dbReference type="ChEBI" id="CHEBI:30616"/>
        <dbReference type="ChEBI" id="CHEBI:57540"/>
        <dbReference type="ChEBI" id="CHEBI:58349"/>
        <dbReference type="ChEBI" id="CHEBI:456216"/>
        <dbReference type="EC" id="2.7.1.23"/>
    </reaction>
</comment>
<comment type="cofactor">
    <cofactor evidence="1">
        <name>a divalent metal cation</name>
        <dbReference type="ChEBI" id="CHEBI:60240"/>
    </cofactor>
</comment>
<comment type="subcellular location">
    <subcellularLocation>
        <location evidence="1">Cytoplasm</location>
    </subcellularLocation>
</comment>
<comment type="similarity">
    <text evidence="1">Belongs to the NAD kinase family.</text>
</comment>
<evidence type="ECO:0000255" key="1">
    <source>
        <dbReference type="HAMAP-Rule" id="MF_00361"/>
    </source>
</evidence>
<dbReference type="EC" id="2.7.1.23" evidence="1"/>
<dbReference type="EMBL" id="CP000606">
    <property type="protein sequence ID" value="ABO24639.1"/>
    <property type="molecule type" value="Genomic_DNA"/>
</dbReference>
<dbReference type="RefSeq" id="WP_011866570.1">
    <property type="nucleotide sequence ID" value="NC_009092.1"/>
</dbReference>
<dbReference type="SMR" id="A3QGP1"/>
<dbReference type="STRING" id="323850.Shew_2773"/>
<dbReference type="KEGG" id="slo:Shew_2773"/>
<dbReference type="eggNOG" id="COG0061">
    <property type="taxonomic scope" value="Bacteria"/>
</dbReference>
<dbReference type="HOGENOM" id="CLU_008831_0_1_6"/>
<dbReference type="OrthoDB" id="9774737at2"/>
<dbReference type="Proteomes" id="UP000001558">
    <property type="component" value="Chromosome"/>
</dbReference>
<dbReference type="GO" id="GO:0005737">
    <property type="term" value="C:cytoplasm"/>
    <property type="evidence" value="ECO:0007669"/>
    <property type="project" value="UniProtKB-SubCell"/>
</dbReference>
<dbReference type="GO" id="GO:0005524">
    <property type="term" value="F:ATP binding"/>
    <property type="evidence" value="ECO:0007669"/>
    <property type="project" value="UniProtKB-KW"/>
</dbReference>
<dbReference type="GO" id="GO:0046872">
    <property type="term" value="F:metal ion binding"/>
    <property type="evidence" value="ECO:0007669"/>
    <property type="project" value="UniProtKB-UniRule"/>
</dbReference>
<dbReference type="GO" id="GO:0051287">
    <property type="term" value="F:NAD binding"/>
    <property type="evidence" value="ECO:0007669"/>
    <property type="project" value="UniProtKB-ARBA"/>
</dbReference>
<dbReference type="GO" id="GO:0003951">
    <property type="term" value="F:NAD+ kinase activity"/>
    <property type="evidence" value="ECO:0007669"/>
    <property type="project" value="UniProtKB-UniRule"/>
</dbReference>
<dbReference type="GO" id="GO:0019674">
    <property type="term" value="P:NAD metabolic process"/>
    <property type="evidence" value="ECO:0007669"/>
    <property type="project" value="InterPro"/>
</dbReference>
<dbReference type="GO" id="GO:0006741">
    <property type="term" value="P:NADP biosynthetic process"/>
    <property type="evidence" value="ECO:0007669"/>
    <property type="project" value="UniProtKB-UniRule"/>
</dbReference>
<dbReference type="FunFam" id="2.60.200.30:FF:000001">
    <property type="entry name" value="NAD kinase"/>
    <property type="match status" value="1"/>
</dbReference>
<dbReference type="Gene3D" id="3.40.50.10330">
    <property type="entry name" value="Probable inorganic polyphosphate/atp-NAD kinase, domain 1"/>
    <property type="match status" value="1"/>
</dbReference>
<dbReference type="Gene3D" id="2.60.200.30">
    <property type="entry name" value="Probable inorganic polyphosphate/atp-NAD kinase, domain 2"/>
    <property type="match status" value="1"/>
</dbReference>
<dbReference type="HAMAP" id="MF_00361">
    <property type="entry name" value="NAD_kinase"/>
    <property type="match status" value="1"/>
</dbReference>
<dbReference type="InterPro" id="IPR017438">
    <property type="entry name" value="ATP-NAD_kinase_N"/>
</dbReference>
<dbReference type="InterPro" id="IPR017437">
    <property type="entry name" value="ATP-NAD_kinase_PpnK-typ_C"/>
</dbReference>
<dbReference type="InterPro" id="IPR016064">
    <property type="entry name" value="NAD/diacylglycerol_kinase_sf"/>
</dbReference>
<dbReference type="InterPro" id="IPR002504">
    <property type="entry name" value="NADK"/>
</dbReference>
<dbReference type="NCBIfam" id="NF002306">
    <property type="entry name" value="PRK01231.1"/>
    <property type="match status" value="1"/>
</dbReference>
<dbReference type="NCBIfam" id="NF002893">
    <property type="entry name" value="PRK03378.1"/>
    <property type="match status" value="1"/>
</dbReference>
<dbReference type="PANTHER" id="PTHR20275">
    <property type="entry name" value="NAD KINASE"/>
    <property type="match status" value="1"/>
</dbReference>
<dbReference type="PANTHER" id="PTHR20275:SF0">
    <property type="entry name" value="NAD KINASE"/>
    <property type="match status" value="1"/>
</dbReference>
<dbReference type="Pfam" id="PF01513">
    <property type="entry name" value="NAD_kinase"/>
    <property type="match status" value="1"/>
</dbReference>
<dbReference type="Pfam" id="PF20143">
    <property type="entry name" value="NAD_kinase_C"/>
    <property type="match status" value="1"/>
</dbReference>
<dbReference type="SUPFAM" id="SSF111331">
    <property type="entry name" value="NAD kinase/diacylglycerol kinase-like"/>
    <property type="match status" value="1"/>
</dbReference>
<name>NADK_SHELP</name>
<feature type="chain" id="PRO_1000192517" description="NAD kinase">
    <location>
        <begin position="1"/>
        <end position="292"/>
    </location>
</feature>
<feature type="active site" description="Proton acceptor" evidence="1">
    <location>
        <position position="72"/>
    </location>
</feature>
<feature type="binding site" evidence="1">
    <location>
        <begin position="72"/>
        <end position="73"/>
    </location>
    <ligand>
        <name>NAD(+)</name>
        <dbReference type="ChEBI" id="CHEBI:57540"/>
    </ligand>
</feature>
<feature type="binding site" evidence="1">
    <location>
        <begin position="146"/>
        <end position="147"/>
    </location>
    <ligand>
        <name>NAD(+)</name>
        <dbReference type="ChEBI" id="CHEBI:57540"/>
    </ligand>
</feature>
<feature type="binding site" evidence="1">
    <location>
        <position position="157"/>
    </location>
    <ligand>
        <name>NAD(+)</name>
        <dbReference type="ChEBI" id="CHEBI:57540"/>
    </ligand>
</feature>
<feature type="binding site" evidence="1">
    <location>
        <position position="174"/>
    </location>
    <ligand>
        <name>NAD(+)</name>
        <dbReference type="ChEBI" id="CHEBI:57540"/>
    </ligand>
</feature>
<feature type="binding site" evidence="1">
    <location>
        <position position="176"/>
    </location>
    <ligand>
        <name>NAD(+)</name>
        <dbReference type="ChEBI" id="CHEBI:57540"/>
    </ligand>
</feature>
<feature type="binding site" evidence="1">
    <location>
        <begin position="187"/>
        <end position="192"/>
    </location>
    <ligand>
        <name>NAD(+)</name>
        <dbReference type="ChEBI" id="CHEBI:57540"/>
    </ligand>
</feature>
<organism>
    <name type="scientific">Shewanella loihica (strain ATCC BAA-1088 / PV-4)</name>
    <dbReference type="NCBI Taxonomy" id="323850"/>
    <lineage>
        <taxon>Bacteria</taxon>
        <taxon>Pseudomonadati</taxon>
        <taxon>Pseudomonadota</taxon>
        <taxon>Gammaproteobacteria</taxon>
        <taxon>Alteromonadales</taxon>
        <taxon>Shewanellaceae</taxon>
        <taxon>Shewanella</taxon>
    </lineage>
</organism>
<sequence>MSKAFHSIGLIGKPHHSGTHKTLKRLHHWLTMQSYDVYVEERVAAEIGPQVKSVDLLQIGEYCDLAIVVGGDGNMLGAARVLARFDIGVIGVNRGNLGFLTDLPPDTFEEALGKVLQGEYETEHRFLLESEVHRHGEMKSSNTAVNEAVLHPGKIAHMIEFEVYIDDKFMYSQRADGMIVSTPTGSTAYSLSAGGAILTPNLEALILVPMFPHTLSCRPIVVDACSIIKLVVSPDNGDALEVSCDGHVTLPVLPGDEIIVRRSKERLRLIHPKGYNYFHVLRNKLGWGSKLF</sequence>
<gene>
    <name evidence="1" type="primary">nadK</name>
    <name type="ordered locus">Shew_2773</name>
</gene>
<proteinExistence type="inferred from homology"/>
<reference key="1">
    <citation type="submission" date="2007-03" db="EMBL/GenBank/DDBJ databases">
        <title>Complete sequence of Shewanella loihica PV-4.</title>
        <authorList>
            <consortium name="US DOE Joint Genome Institute"/>
            <person name="Copeland A."/>
            <person name="Lucas S."/>
            <person name="Lapidus A."/>
            <person name="Barry K."/>
            <person name="Detter J.C."/>
            <person name="Glavina del Rio T."/>
            <person name="Hammon N."/>
            <person name="Israni S."/>
            <person name="Dalin E."/>
            <person name="Tice H."/>
            <person name="Pitluck S."/>
            <person name="Chain P."/>
            <person name="Malfatti S."/>
            <person name="Shin M."/>
            <person name="Vergez L."/>
            <person name="Schmutz J."/>
            <person name="Larimer F."/>
            <person name="Land M."/>
            <person name="Hauser L."/>
            <person name="Kyrpides N."/>
            <person name="Mikhailova N."/>
            <person name="Romine M.F."/>
            <person name="Serres G."/>
            <person name="Fredrickson J."/>
            <person name="Tiedje J."/>
            <person name="Richardson P."/>
        </authorList>
    </citation>
    <scope>NUCLEOTIDE SEQUENCE [LARGE SCALE GENOMIC DNA]</scope>
    <source>
        <strain>ATCC BAA-1088 / PV-4</strain>
    </source>
</reference>